<keyword id="KW-0997">Cell inner membrane</keyword>
<keyword id="KW-1003">Cell membrane</keyword>
<keyword id="KW-0472">Membrane</keyword>
<keyword id="KW-0808">Transferase</keyword>
<keyword id="KW-0812">Transmembrane</keyword>
<keyword id="KW-1133">Transmembrane helix</keyword>
<sequence length="283" mass="31835">MIIHHQFDPVLISIGPLAVRWYALSYILGFILFTFLGRRRIAQGLSVFTKESLDDFLTWGILGVILGGRLGYVLFYKFSDYLAHPLDIFKVWEGGMSFHGGFLGVVIAIWLFSRKHGIGFLKLMDTVAPLVPLGLASGRIGNFINGELWGRITDINAFWAMGFPQAHYEDAEAAAHNPLWAEWLQQYGMLPRHPSQLYQFALEGICLFAVVWLFSKKPRPTGQTAALFLGGYGVFRFIAEFARQPDDYLGLLTLGLSMGQWLSVPMIVLGIVGFVRFGMKKQH</sequence>
<protein>
    <recommendedName>
        <fullName evidence="1">Phosphatidylglycerol--prolipoprotein diacylglyceryl transferase</fullName>
        <ecNumber evidence="1">2.5.1.145</ecNumber>
    </recommendedName>
</protein>
<name>LGT_NEIG2</name>
<organism>
    <name type="scientific">Neisseria gonorrhoeae (strain NCCP11945)</name>
    <dbReference type="NCBI Taxonomy" id="521006"/>
    <lineage>
        <taxon>Bacteria</taxon>
        <taxon>Pseudomonadati</taxon>
        <taxon>Pseudomonadota</taxon>
        <taxon>Betaproteobacteria</taxon>
        <taxon>Neisseriales</taxon>
        <taxon>Neisseriaceae</taxon>
        <taxon>Neisseria</taxon>
    </lineage>
</organism>
<reference key="1">
    <citation type="journal article" date="2008" name="J. Bacteriol.">
        <title>Complete genome sequence of Neisseria gonorrhoeae NCCP11945.</title>
        <authorList>
            <person name="Chung G.T."/>
            <person name="Yoo J.S."/>
            <person name="Oh H.B."/>
            <person name="Lee Y.S."/>
            <person name="Cha S.H."/>
            <person name="Kim S.J."/>
            <person name="Yoo C.K."/>
        </authorList>
    </citation>
    <scope>NUCLEOTIDE SEQUENCE [LARGE SCALE GENOMIC DNA]</scope>
    <source>
        <strain>NCCP11945</strain>
    </source>
</reference>
<proteinExistence type="inferred from homology"/>
<comment type="function">
    <text evidence="1">Catalyzes the transfer of the diacylglyceryl group from phosphatidylglycerol to the sulfhydryl group of the N-terminal cysteine of a prolipoprotein, the first step in the formation of mature lipoproteins.</text>
</comment>
<comment type="catalytic activity">
    <reaction evidence="1">
        <text>L-cysteinyl-[prolipoprotein] + a 1,2-diacyl-sn-glycero-3-phospho-(1'-sn-glycerol) = an S-1,2-diacyl-sn-glyceryl-L-cysteinyl-[prolipoprotein] + sn-glycerol 1-phosphate + H(+)</text>
        <dbReference type="Rhea" id="RHEA:56712"/>
        <dbReference type="Rhea" id="RHEA-COMP:14679"/>
        <dbReference type="Rhea" id="RHEA-COMP:14680"/>
        <dbReference type="ChEBI" id="CHEBI:15378"/>
        <dbReference type="ChEBI" id="CHEBI:29950"/>
        <dbReference type="ChEBI" id="CHEBI:57685"/>
        <dbReference type="ChEBI" id="CHEBI:64716"/>
        <dbReference type="ChEBI" id="CHEBI:140658"/>
        <dbReference type="EC" id="2.5.1.145"/>
    </reaction>
</comment>
<comment type="pathway">
    <text evidence="1">Protein modification; lipoprotein biosynthesis (diacylglyceryl transfer).</text>
</comment>
<comment type="subcellular location">
    <subcellularLocation>
        <location evidence="1">Cell inner membrane</location>
        <topology evidence="1">Multi-pass membrane protein</topology>
    </subcellularLocation>
</comment>
<comment type="similarity">
    <text evidence="1">Belongs to the Lgt family.</text>
</comment>
<feature type="chain" id="PRO_1000137440" description="Phosphatidylglycerol--prolipoprotein diacylglyceryl transferase">
    <location>
        <begin position="1"/>
        <end position="283"/>
    </location>
</feature>
<feature type="transmembrane region" description="Helical" evidence="1">
    <location>
        <begin position="17"/>
        <end position="37"/>
    </location>
</feature>
<feature type="transmembrane region" description="Helical" evidence="1">
    <location>
        <begin position="56"/>
        <end position="76"/>
    </location>
</feature>
<feature type="transmembrane region" description="Helical" evidence="1">
    <location>
        <begin position="92"/>
        <end position="112"/>
    </location>
</feature>
<feature type="transmembrane region" description="Helical" evidence="1">
    <location>
        <begin position="222"/>
        <end position="242"/>
    </location>
</feature>
<feature type="transmembrane region" description="Helical" evidence="1">
    <location>
        <begin position="255"/>
        <end position="275"/>
    </location>
</feature>
<feature type="binding site" evidence="1">
    <location>
        <position position="139"/>
    </location>
    <ligand>
        <name>a 1,2-diacyl-sn-glycero-3-phospho-(1'-sn-glycerol)</name>
        <dbReference type="ChEBI" id="CHEBI:64716"/>
    </ligand>
</feature>
<evidence type="ECO:0000255" key="1">
    <source>
        <dbReference type="HAMAP-Rule" id="MF_01147"/>
    </source>
</evidence>
<dbReference type="EC" id="2.5.1.145" evidence="1"/>
<dbReference type="EMBL" id="CP001050">
    <property type="protein sequence ID" value="ACF29639.1"/>
    <property type="molecule type" value="Genomic_DNA"/>
</dbReference>
<dbReference type="RefSeq" id="WP_003688557.1">
    <property type="nucleotide sequence ID" value="NC_011035.1"/>
</dbReference>
<dbReference type="SMR" id="B4RLF2"/>
<dbReference type="GeneID" id="66753177"/>
<dbReference type="KEGG" id="ngk:NGK_0962"/>
<dbReference type="HOGENOM" id="CLU_013386_1_0_4"/>
<dbReference type="UniPathway" id="UPA00664"/>
<dbReference type="Proteomes" id="UP000002564">
    <property type="component" value="Chromosome"/>
</dbReference>
<dbReference type="GO" id="GO:0005886">
    <property type="term" value="C:plasma membrane"/>
    <property type="evidence" value="ECO:0007669"/>
    <property type="project" value="UniProtKB-SubCell"/>
</dbReference>
<dbReference type="GO" id="GO:0008961">
    <property type="term" value="F:phosphatidylglycerol-prolipoprotein diacylglyceryl transferase activity"/>
    <property type="evidence" value="ECO:0007669"/>
    <property type="project" value="UniProtKB-UniRule"/>
</dbReference>
<dbReference type="GO" id="GO:0042158">
    <property type="term" value="P:lipoprotein biosynthetic process"/>
    <property type="evidence" value="ECO:0007669"/>
    <property type="project" value="UniProtKB-UniRule"/>
</dbReference>
<dbReference type="HAMAP" id="MF_01147">
    <property type="entry name" value="Lgt"/>
    <property type="match status" value="1"/>
</dbReference>
<dbReference type="InterPro" id="IPR001640">
    <property type="entry name" value="Lgt"/>
</dbReference>
<dbReference type="NCBIfam" id="TIGR00544">
    <property type="entry name" value="lgt"/>
    <property type="match status" value="1"/>
</dbReference>
<dbReference type="PANTHER" id="PTHR30589:SF0">
    <property type="entry name" value="PHOSPHATIDYLGLYCEROL--PROLIPOPROTEIN DIACYLGLYCERYL TRANSFERASE"/>
    <property type="match status" value="1"/>
</dbReference>
<dbReference type="PANTHER" id="PTHR30589">
    <property type="entry name" value="PROLIPOPROTEIN DIACYLGLYCERYL TRANSFERASE"/>
    <property type="match status" value="1"/>
</dbReference>
<dbReference type="Pfam" id="PF01790">
    <property type="entry name" value="LGT"/>
    <property type="match status" value="1"/>
</dbReference>
<dbReference type="PROSITE" id="PS01311">
    <property type="entry name" value="LGT"/>
    <property type="match status" value="1"/>
</dbReference>
<accession>B4RLF2</accession>
<gene>
    <name evidence="1" type="primary">lgt</name>
    <name type="ordered locus">NGK_0962</name>
</gene>